<protein>
    <recommendedName>
        <fullName evidence="1">Mitochondrial distribution and morphology protein 12</fullName>
    </recommendedName>
    <alternativeName>
        <fullName evidence="1">Mitochondrial inheritance component MDM12</fullName>
    </alternativeName>
</protein>
<reference key="1">
    <citation type="journal article" date="2009" name="Genome Res.">
        <title>Comparative genomics of protoploid Saccharomycetaceae.</title>
        <authorList>
            <consortium name="The Genolevures Consortium"/>
            <person name="Souciet J.-L."/>
            <person name="Dujon B."/>
            <person name="Gaillardin C."/>
            <person name="Johnston M."/>
            <person name="Baret P.V."/>
            <person name="Cliften P."/>
            <person name="Sherman D.J."/>
            <person name="Weissenbach J."/>
            <person name="Westhof E."/>
            <person name="Wincker P."/>
            <person name="Jubin C."/>
            <person name="Poulain J."/>
            <person name="Barbe V."/>
            <person name="Segurens B."/>
            <person name="Artiguenave F."/>
            <person name="Anthouard V."/>
            <person name="Vacherie B."/>
            <person name="Val M.-E."/>
            <person name="Fulton R.S."/>
            <person name="Minx P."/>
            <person name="Wilson R."/>
            <person name="Durrens P."/>
            <person name="Jean G."/>
            <person name="Marck C."/>
            <person name="Martin T."/>
            <person name="Nikolski M."/>
            <person name="Rolland T."/>
            <person name="Seret M.-L."/>
            <person name="Casaregola S."/>
            <person name="Despons L."/>
            <person name="Fairhead C."/>
            <person name="Fischer G."/>
            <person name="Lafontaine I."/>
            <person name="Leh V."/>
            <person name="Lemaire M."/>
            <person name="de Montigny J."/>
            <person name="Neuveglise C."/>
            <person name="Thierry A."/>
            <person name="Blanc-Lenfle I."/>
            <person name="Bleykasten C."/>
            <person name="Diffels J."/>
            <person name="Fritsch E."/>
            <person name="Frangeul L."/>
            <person name="Goeffon A."/>
            <person name="Jauniaux N."/>
            <person name="Kachouri-Lafond R."/>
            <person name="Payen C."/>
            <person name="Potier S."/>
            <person name="Pribylova L."/>
            <person name="Ozanne C."/>
            <person name="Richard G.-F."/>
            <person name="Sacerdot C."/>
            <person name="Straub M.-L."/>
            <person name="Talla E."/>
        </authorList>
    </citation>
    <scope>NUCLEOTIDE SEQUENCE [LARGE SCALE GENOMIC DNA]</scope>
    <source>
        <strain>ATCC 2623 / CBS 732 / BCRC 21506 / NBRC 1130 / NCYC 568 / NRRL Y-229</strain>
    </source>
</reference>
<feature type="chain" id="PRO_0000384319" description="Mitochondrial distribution and morphology protein 12">
    <location>
        <begin position="1"/>
        <end position="258"/>
    </location>
</feature>
<feature type="domain" description="SMP-LTD" evidence="1">
    <location>
        <begin position="1"/>
        <end position="233"/>
    </location>
</feature>
<feature type="region of interest" description="Disordered" evidence="2">
    <location>
        <begin position="238"/>
        <end position="258"/>
    </location>
</feature>
<feature type="compositionally biased region" description="Low complexity" evidence="2">
    <location>
        <begin position="246"/>
        <end position="258"/>
    </location>
</feature>
<comment type="function">
    <text evidence="1">Component of the ERMES/MDM complex, which serves as a molecular tether to connect the endoplasmic reticulum (ER) and mitochondria. Components of this complex are involved in the control of mitochondrial shape and protein biogenesis, and function in nonvesicular lipid trafficking between the ER and mitochondria. MDM12 is required for the interaction of the ER-resident membrane protein MMM1 and the outer mitochondrial membrane-resident beta-barrel protein MDM10. The MDM12-MMM1 subcomplex functions in the major beta-barrel assembly pathway that is responsible for biogenesis of all mitochondrial outer membrane beta-barrel proteins, and acts in a late step after the SAM complex. The MDM10-MDM12-MMM1 subcomplex further acts in the TOM40-specific pathway after the action of the MDM12-MMM1 complex. Essential for establishing and maintaining the structure of mitochondria and maintenance of mtDNA nucleoids.</text>
</comment>
<comment type="subunit">
    <text evidence="1">Component of the ER-mitochondria encounter structure (ERMES) or MDM complex, composed of MMM1, MDM10, MDM12 and MDM34. A MMM1 homodimer associates with one molecule of MDM12 on each side in a pairwise head-to-tail manner, and the SMP-LTD domains of MMM1 and MDM12 generate a continuous hydrophobic tunnel for phospholipid trafficking.</text>
</comment>
<comment type="subcellular location">
    <subcellularLocation>
        <location evidence="1">Mitochondrion outer membrane</location>
        <topology evidence="1">Peripheral membrane protein</topology>
        <orientation evidence="1">Cytoplasmic side</orientation>
    </subcellularLocation>
    <subcellularLocation>
        <location evidence="1">Endoplasmic reticulum membrane</location>
        <topology evidence="1">Peripheral membrane protein</topology>
        <orientation evidence="1">Cytoplasmic side</orientation>
    </subcellularLocation>
    <text evidence="1">The ERMES/MDM complex localizes to a few discrete foci (around 10 per single cell), that represent mitochondria-endoplasmic reticulum junctions. These foci are often found next to mtDNA nucleoids.</text>
</comment>
<comment type="domain">
    <text evidence="1">The SMP-LTD domain is a barrel-like domain that can bind various types of glycerophospholipids in its interior and mediate their transfer between two adjacent bilayers.</text>
</comment>
<comment type="similarity">
    <text evidence="1">Belongs to the MDM12 family.</text>
</comment>
<proteinExistence type="inferred from homology"/>
<gene>
    <name evidence="1" type="primary">MDM12</name>
    <name type="ordered locus">ZYRO0C07348g</name>
</gene>
<keyword id="KW-0256">Endoplasmic reticulum</keyword>
<keyword id="KW-0445">Lipid transport</keyword>
<keyword id="KW-0446">Lipid-binding</keyword>
<keyword id="KW-0472">Membrane</keyword>
<keyword id="KW-0496">Mitochondrion</keyword>
<keyword id="KW-1000">Mitochondrion outer membrane</keyword>
<keyword id="KW-1185">Reference proteome</keyword>
<keyword id="KW-0813">Transport</keyword>
<accession>C5DTC4</accession>
<dbReference type="EMBL" id="CU928175">
    <property type="protein sequence ID" value="CAR27035.1"/>
    <property type="molecule type" value="Genomic_DNA"/>
</dbReference>
<dbReference type="RefSeq" id="XP_002495968.1">
    <property type="nucleotide sequence ID" value="XM_002495923.1"/>
</dbReference>
<dbReference type="SMR" id="C5DTC4"/>
<dbReference type="FunCoup" id="C5DTC4">
    <property type="interactions" value="78"/>
</dbReference>
<dbReference type="STRING" id="559307.C5DTC4"/>
<dbReference type="GeneID" id="8203175"/>
<dbReference type="KEGG" id="zro:ZYRO0C07348g"/>
<dbReference type="HOGENOM" id="CLU_026794_2_0_1"/>
<dbReference type="InParanoid" id="C5DTC4"/>
<dbReference type="Proteomes" id="UP000008536">
    <property type="component" value="Chromosome C"/>
</dbReference>
<dbReference type="GO" id="GO:0005789">
    <property type="term" value="C:endoplasmic reticulum membrane"/>
    <property type="evidence" value="ECO:0007669"/>
    <property type="project" value="UniProtKB-SubCell"/>
</dbReference>
<dbReference type="GO" id="GO:0032865">
    <property type="term" value="C:ERMES complex"/>
    <property type="evidence" value="ECO:0007669"/>
    <property type="project" value="UniProtKB-UniRule"/>
</dbReference>
<dbReference type="GO" id="GO:0008289">
    <property type="term" value="F:lipid binding"/>
    <property type="evidence" value="ECO:0007669"/>
    <property type="project" value="UniProtKB-KW"/>
</dbReference>
<dbReference type="GO" id="GO:0000002">
    <property type="term" value="P:mitochondrial genome maintenance"/>
    <property type="evidence" value="ECO:0007669"/>
    <property type="project" value="UniProtKB-UniRule"/>
</dbReference>
<dbReference type="GO" id="GO:1990456">
    <property type="term" value="P:mitochondrion-endoplasmic reticulum membrane tethering"/>
    <property type="evidence" value="ECO:0007669"/>
    <property type="project" value="TreeGrafter"/>
</dbReference>
<dbReference type="GO" id="GO:0015914">
    <property type="term" value="P:phospholipid transport"/>
    <property type="evidence" value="ECO:0007669"/>
    <property type="project" value="TreeGrafter"/>
</dbReference>
<dbReference type="GO" id="GO:0045040">
    <property type="term" value="P:protein insertion into mitochondrial outer membrane"/>
    <property type="evidence" value="ECO:0007669"/>
    <property type="project" value="UniProtKB-UniRule"/>
</dbReference>
<dbReference type="CDD" id="cd21672">
    <property type="entry name" value="SMP_Mdm12"/>
    <property type="match status" value="1"/>
</dbReference>
<dbReference type="HAMAP" id="MF_03104">
    <property type="entry name" value="Mdm12"/>
    <property type="match status" value="1"/>
</dbReference>
<dbReference type="InterPro" id="IPR027532">
    <property type="entry name" value="Mdm12"/>
</dbReference>
<dbReference type="InterPro" id="IPR019411">
    <property type="entry name" value="MMM1_dom"/>
</dbReference>
<dbReference type="InterPro" id="IPR031468">
    <property type="entry name" value="SMP_LBD"/>
</dbReference>
<dbReference type="PANTHER" id="PTHR28204">
    <property type="entry name" value="MITOCHONDRIAL DISTRIBUTION AND MORPHOLOGY PROTEIN 12"/>
    <property type="match status" value="1"/>
</dbReference>
<dbReference type="PANTHER" id="PTHR28204:SF1">
    <property type="entry name" value="MITOCHONDRIAL DISTRIBUTION AND MORPHOLOGY PROTEIN 12"/>
    <property type="match status" value="1"/>
</dbReference>
<dbReference type="Pfam" id="PF10296">
    <property type="entry name" value="MMM1"/>
    <property type="match status" value="1"/>
</dbReference>
<dbReference type="PROSITE" id="PS51847">
    <property type="entry name" value="SMP"/>
    <property type="match status" value="1"/>
</dbReference>
<sequence>MSFDIHWSNLESDTRLNESIKNHLNTYLESISLPSYVCNLRILDFSLGKTAPNITLREISDPLDELYRGLNEDEPDSITPSPNDIQFLVEVEYKGDLLVTLAADLVLNYPSDNFMTLPVKLTISNVGLHSLCLVAHLSKHLLISFLCDISDVDLDGNESLLDPKGHVLSPRRSLERISIIRNMKIETEIGQQHSGEGSVLRSVGRLEQFLLEIFKDLLRKEVSWPSWIELDFNDDNEEDLQQSKDTPTTANTGTTTTN</sequence>
<evidence type="ECO:0000255" key="1">
    <source>
        <dbReference type="HAMAP-Rule" id="MF_03104"/>
    </source>
</evidence>
<evidence type="ECO:0000256" key="2">
    <source>
        <dbReference type="SAM" id="MobiDB-lite"/>
    </source>
</evidence>
<name>MDM12_ZYGRC</name>
<organism>
    <name type="scientific">Zygosaccharomyces rouxii (strain ATCC 2623 / CBS 732 / NBRC 1130 / NCYC 568 / NRRL Y-229)</name>
    <dbReference type="NCBI Taxonomy" id="559307"/>
    <lineage>
        <taxon>Eukaryota</taxon>
        <taxon>Fungi</taxon>
        <taxon>Dikarya</taxon>
        <taxon>Ascomycota</taxon>
        <taxon>Saccharomycotina</taxon>
        <taxon>Saccharomycetes</taxon>
        <taxon>Saccharomycetales</taxon>
        <taxon>Saccharomycetaceae</taxon>
        <taxon>Zygosaccharomyces</taxon>
    </lineage>
</organism>